<gene>
    <name evidence="1" type="primary">matK</name>
</gene>
<name>MATK_LILRE</name>
<geneLocation type="chloroplast"/>
<dbReference type="EMBL" id="AB040200">
    <property type="protein sequence ID" value="BAB16808.1"/>
    <property type="molecule type" value="Genomic_DNA"/>
</dbReference>
<dbReference type="GO" id="GO:0009507">
    <property type="term" value="C:chloroplast"/>
    <property type="evidence" value="ECO:0007669"/>
    <property type="project" value="UniProtKB-SubCell"/>
</dbReference>
<dbReference type="GO" id="GO:0003723">
    <property type="term" value="F:RNA binding"/>
    <property type="evidence" value="ECO:0007669"/>
    <property type="project" value="UniProtKB-KW"/>
</dbReference>
<dbReference type="GO" id="GO:0006397">
    <property type="term" value="P:mRNA processing"/>
    <property type="evidence" value="ECO:0007669"/>
    <property type="project" value="UniProtKB-KW"/>
</dbReference>
<dbReference type="GO" id="GO:0008380">
    <property type="term" value="P:RNA splicing"/>
    <property type="evidence" value="ECO:0007669"/>
    <property type="project" value="UniProtKB-UniRule"/>
</dbReference>
<dbReference type="GO" id="GO:0008033">
    <property type="term" value="P:tRNA processing"/>
    <property type="evidence" value="ECO:0007669"/>
    <property type="project" value="UniProtKB-KW"/>
</dbReference>
<dbReference type="HAMAP" id="MF_01390">
    <property type="entry name" value="MatK"/>
    <property type="match status" value="1"/>
</dbReference>
<dbReference type="InterPro" id="IPR024937">
    <property type="entry name" value="Domain_X"/>
</dbReference>
<dbReference type="InterPro" id="IPR002866">
    <property type="entry name" value="Maturase_MatK"/>
</dbReference>
<dbReference type="InterPro" id="IPR024942">
    <property type="entry name" value="Maturase_MatK_N"/>
</dbReference>
<dbReference type="PANTHER" id="PTHR34811">
    <property type="entry name" value="MATURASE K"/>
    <property type="match status" value="1"/>
</dbReference>
<dbReference type="PANTHER" id="PTHR34811:SF1">
    <property type="entry name" value="MATURASE K"/>
    <property type="match status" value="1"/>
</dbReference>
<dbReference type="Pfam" id="PF01348">
    <property type="entry name" value="Intron_maturas2"/>
    <property type="match status" value="1"/>
</dbReference>
<dbReference type="Pfam" id="PF01824">
    <property type="entry name" value="MatK_N"/>
    <property type="match status" value="1"/>
</dbReference>
<proteinExistence type="inferred from homology"/>
<accession>Q9GHC3</accession>
<protein>
    <recommendedName>
        <fullName evidence="1">Maturase K</fullName>
    </recommendedName>
    <alternativeName>
        <fullName evidence="1">Intron maturase</fullName>
    </alternativeName>
</protein>
<keyword id="KW-0150">Chloroplast</keyword>
<keyword id="KW-0507">mRNA processing</keyword>
<keyword id="KW-0934">Plastid</keyword>
<keyword id="KW-0694">RNA-binding</keyword>
<keyword id="KW-0819">tRNA processing</keyword>
<feature type="chain" id="PRO_0000143478" description="Maturase K">
    <location>
        <begin position="1"/>
        <end position="512"/>
    </location>
</feature>
<evidence type="ECO:0000255" key="1">
    <source>
        <dbReference type="HAMAP-Rule" id="MF_01390"/>
    </source>
</evidence>
<organism>
    <name type="scientific">Lilium regale</name>
    <name type="common">Regal lily</name>
    <dbReference type="NCBI Taxonomy" id="82328"/>
    <lineage>
        <taxon>Eukaryota</taxon>
        <taxon>Viridiplantae</taxon>
        <taxon>Streptophyta</taxon>
        <taxon>Embryophyta</taxon>
        <taxon>Tracheophyta</taxon>
        <taxon>Spermatophyta</taxon>
        <taxon>Magnoliopsida</taxon>
        <taxon>Liliopsida</taxon>
        <taxon>Liliales</taxon>
        <taxon>Liliaceae</taxon>
        <taxon>Lilium</taxon>
    </lineage>
</organism>
<sequence>MEEVQEYLKKDRSPQQHFLYPLLLQEYIYTLAHDDSLNGSIFYEPIEFIGYDNKFSLVLVKRLIIRMYQQNFLIYLVNDSNQNRFGGHSNYFYSHFFYSQMVSKGFSVIVEIPFSLRLVSSSEEKEIPKSQNLGSIHSIFPFLEDKLSHLNNVSDILIPHPIHFEILVQILQCWIQDVPSLHLLRFFLHKYQNLNKTIQSNKTIYVFSKENKRLFWFLYNSYVSECEFLLVFFHKQSCYLRSTSSGAFLERSHFYGKMEHIIIVCCNNFQKTLWPVKDPLIHYVRYQGKAILASRGTHLLMKKWRYYFVNFWQYYFHFWSQPYRMHINSLLNYSFYFMGYLLGVLINPYAVKNQMLENSFLIDTVINKFDTIIPIIPLIGSLSKAKFCTFSGHPISKPIWADLLDFDIIDRFGRICRNLSHYHSGSSKKQSLYRIKYILRLSGGXXLARKHKSTXVPLLQRLGSGLLEEFFTEEXQVLSFFFPKTTLFTLHGSHRERIWSLDIIRINDLVNN</sequence>
<reference key="1">
    <citation type="journal article" date="2000" name="Plant Biol.">
        <title>A phylogenetic analysis of the plastid matK gene with emphasis on Melanthiaceae sensu lato.</title>
        <authorList>
            <person name="Fuse S."/>
            <person name="Tamura M.N."/>
        </authorList>
    </citation>
    <scope>NUCLEOTIDE SEQUENCE [GENOMIC DNA]</scope>
</reference>
<comment type="function">
    <text evidence="1">Usually encoded in the trnK tRNA gene intron. Probably assists in splicing its own and other chloroplast group II introns.</text>
</comment>
<comment type="subcellular location">
    <subcellularLocation>
        <location>Plastid</location>
        <location>Chloroplast</location>
    </subcellularLocation>
</comment>
<comment type="similarity">
    <text evidence="1">Belongs to the intron maturase 2 family. MatK subfamily.</text>
</comment>